<reference key="1">
    <citation type="journal article" date="2004" name="PLoS Biol.">
        <title>Genomic insights into methanotrophy: the complete genome sequence of Methylococcus capsulatus (Bath).</title>
        <authorList>
            <person name="Ward N.L."/>
            <person name="Larsen O."/>
            <person name="Sakwa J."/>
            <person name="Bruseth L."/>
            <person name="Khouri H.M."/>
            <person name="Durkin A.S."/>
            <person name="Dimitrov G."/>
            <person name="Jiang L."/>
            <person name="Scanlan D."/>
            <person name="Kang K.H."/>
            <person name="Lewis M.R."/>
            <person name="Nelson K.E."/>
            <person name="Methe B.A."/>
            <person name="Wu M."/>
            <person name="Heidelberg J.F."/>
            <person name="Paulsen I.T."/>
            <person name="Fouts D.E."/>
            <person name="Ravel J."/>
            <person name="Tettelin H."/>
            <person name="Ren Q."/>
            <person name="Read T.D."/>
            <person name="DeBoy R.T."/>
            <person name="Seshadri R."/>
            <person name="Salzberg S.L."/>
            <person name="Jensen H.B."/>
            <person name="Birkeland N.K."/>
            <person name="Nelson W.C."/>
            <person name="Dodson R.J."/>
            <person name="Grindhaug S.H."/>
            <person name="Holt I.E."/>
            <person name="Eidhammer I."/>
            <person name="Jonasen I."/>
            <person name="Vanaken S."/>
            <person name="Utterback T.R."/>
            <person name="Feldblyum T.V."/>
            <person name="Fraser C.M."/>
            <person name="Lillehaug J.R."/>
            <person name="Eisen J.A."/>
        </authorList>
    </citation>
    <scope>NUCLEOTIDE SEQUENCE [LARGE SCALE GENOMIC DNA]</scope>
    <source>
        <strain>ATCC 33009 / NCIMB 11132 / Bath</strain>
    </source>
</reference>
<sequence length="443" mass="48978">MGHRGKRKPLPAEPIAAHIESFAHDGKGIAHVDGRVVFVDGALPGEDVTFVYTEIKRDYAAGRVVEIVTASPDRVPARCRHFALCGGCSLQYLSEDAQIALKEDLLLDQFRRIGKVEPAAQFPPLRGPHWGYRSRARLGARYVAKKGRELVGFREHASAKIVDMTDCPVLHPALGERIQAFAELIEGLSLRERLPQIEAAVGEERTALVFRVLEDPTAEDFARLARFGKDQGLDVYIQREGRDSVAPVYPETAHDLSYSLPEWEVTFRFGPLDFTQVNMAINRQMIDQVMQALDPQPEERVLDLFCGLGNFTLPLARRAGHVTGVEGGAEAVARAIRNAADNGIGNVEFHVADLSKPESCGSWAGREYHKVLLDPSRSGALEILQCVPNWKAGRIVYVSCNPSTLARDAGILVHEYGYRLLKAGVMDMFPHTAHVESIAVFER</sequence>
<dbReference type="EC" id="2.1.1.190" evidence="1"/>
<dbReference type="EMBL" id="AE017282">
    <property type="protein sequence ID" value="AAU91827.1"/>
    <property type="molecule type" value="Genomic_DNA"/>
</dbReference>
<dbReference type="RefSeq" id="WP_010961147.1">
    <property type="nucleotide sequence ID" value="NC_002977.6"/>
</dbReference>
<dbReference type="SMR" id="Q606W5"/>
<dbReference type="STRING" id="243233.MCA1898"/>
<dbReference type="GeneID" id="88224138"/>
<dbReference type="KEGG" id="mca:MCA1898"/>
<dbReference type="eggNOG" id="COG2265">
    <property type="taxonomic scope" value="Bacteria"/>
</dbReference>
<dbReference type="HOGENOM" id="CLU_014689_8_2_6"/>
<dbReference type="Proteomes" id="UP000006821">
    <property type="component" value="Chromosome"/>
</dbReference>
<dbReference type="GO" id="GO:0051539">
    <property type="term" value="F:4 iron, 4 sulfur cluster binding"/>
    <property type="evidence" value="ECO:0007669"/>
    <property type="project" value="UniProtKB-KW"/>
</dbReference>
<dbReference type="GO" id="GO:0005506">
    <property type="term" value="F:iron ion binding"/>
    <property type="evidence" value="ECO:0007669"/>
    <property type="project" value="UniProtKB-UniRule"/>
</dbReference>
<dbReference type="GO" id="GO:0003723">
    <property type="term" value="F:RNA binding"/>
    <property type="evidence" value="ECO:0007669"/>
    <property type="project" value="InterPro"/>
</dbReference>
<dbReference type="GO" id="GO:0070041">
    <property type="term" value="F:rRNA (uridine-C5-)-methyltransferase activity"/>
    <property type="evidence" value="ECO:0007669"/>
    <property type="project" value="UniProtKB-UniRule"/>
</dbReference>
<dbReference type="GO" id="GO:0070475">
    <property type="term" value="P:rRNA base methylation"/>
    <property type="evidence" value="ECO:0007669"/>
    <property type="project" value="TreeGrafter"/>
</dbReference>
<dbReference type="CDD" id="cd02440">
    <property type="entry name" value="AdoMet_MTases"/>
    <property type="match status" value="1"/>
</dbReference>
<dbReference type="FunFam" id="2.40.50.140:FF:000097">
    <property type="entry name" value="23S rRNA (uracil(1939)-C(5))-methyltransferase RlmD"/>
    <property type="match status" value="1"/>
</dbReference>
<dbReference type="Gene3D" id="2.40.50.1070">
    <property type="match status" value="1"/>
</dbReference>
<dbReference type="Gene3D" id="2.40.50.140">
    <property type="entry name" value="Nucleic acid-binding proteins"/>
    <property type="match status" value="1"/>
</dbReference>
<dbReference type="Gene3D" id="3.40.50.150">
    <property type="entry name" value="Vaccinia Virus protein VP39"/>
    <property type="match status" value="1"/>
</dbReference>
<dbReference type="HAMAP" id="MF_01010">
    <property type="entry name" value="23SrRNA_methyltr_RlmD"/>
    <property type="match status" value="1"/>
</dbReference>
<dbReference type="InterPro" id="IPR001566">
    <property type="entry name" value="23S_rRNA_MeTrfase_RlmD"/>
</dbReference>
<dbReference type="InterPro" id="IPR030390">
    <property type="entry name" value="MeTrfase_TrmA_AS"/>
</dbReference>
<dbReference type="InterPro" id="IPR030391">
    <property type="entry name" value="MeTrfase_TrmA_CS"/>
</dbReference>
<dbReference type="InterPro" id="IPR012340">
    <property type="entry name" value="NA-bd_OB-fold"/>
</dbReference>
<dbReference type="InterPro" id="IPR029063">
    <property type="entry name" value="SAM-dependent_MTases_sf"/>
</dbReference>
<dbReference type="InterPro" id="IPR002792">
    <property type="entry name" value="TRAM_dom"/>
</dbReference>
<dbReference type="InterPro" id="IPR010280">
    <property type="entry name" value="U5_MeTrfase_fam"/>
</dbReference>
<dbReference type="NCBIfam" id="NF009639">
    <property type="entry name" value="PRK13168.1"/>
    <property type="match status" value="1"/>
</dbReference>
<dbReference type="NCBIfam" id="TIGR00479">
    <property type="entry name" value="rumA"/>
    <property type="match status" value="1"/>
</dbReference>
<dbReference type="PANTHER" id="PTHR11061:SF49">
    <property type="entry name" value="23S RRNA (URACIL(1939)-C(5))-METHYLTRANSFERASE RLMD"/>
    <property type="match status" value="1"/>
</dbReference>
<dbReference type="PANTHER" id="PTHR11061">
    <property type="entry name" value="RNA M5U METHYLTRANSFERASE"/>
    <property type="match status" value="1"/>
</dbReference>
<dbReference type="Pfam" id="PF01938">
    <property type="entry name" value="TRAM"/>
    <property type="match status" value="1"/>
</dbReference>
<dbReference type="Pfam" id="PF05958">
    <property type="entry name" value="tRNA_U5-meth_tr"/>
    <property type="match status" value="1"/>
</dbReference>
<dbReference type="SUPFAM" id="SSF50249">
    <property type="entry name" value="Nucleic acid-binding proteins"/>
    <property type="match status" value="1"/>
</dbReference>
<dbReference type="SUPFAM" id="SSF53335">
    <property type="entry name" value="S-adenosyl-L-methionine-dependent methyltransferases"/>
    <property type="match status" value="1"/>
</dbReference>
<dbReference type="PROSITE" id="PS51687">
    <property type="entry name" value="SAM_MT_RNA_M5U"/>
    <property type="match status" value="1"/>
</dbReference>
<dbReference type="PROSITE" id="PS50926">
    <property type="entry name" value="TRAM"/>
    <property type="match status" value="1"/>
</dbReference>
<dbReference type="PROSITE" id="PS01230">
    <property type="entry name" value="TRMA_1"/>
    <property type="match status" value="1"/>
</dbReference>
<dbReference type="PROSITE" id="PS01231">
    <property type="entry name" value="TRMA_2"/>
    <property type="match status" value="1"/>
</dbReference>
<proteinExistence type="inferred from homology"/>
<keyword id="KW-0004">4Fe-4S</keyword>
<keyword id="KW-0408">Iron</keyword>
<keyword id="KW-0411">Iron-sulfur</keyword>
<keyword id="KW-0479">Metal-binding</keyword>
<keyword id="KW-0489">Methyltransferase</keyword>
<keyword id="KW-1185">Reference proteome</keyword>
<keyword id="KW-0698">rRNA processing</keyword>
<keyword id="KW-0949">S-adenosyl-L-methionine</keyword>
<keyword id="KW-0808">Transferase</keyword>
<name>RLMD_METCA</name>
<accession>Q606W5</accession>
<comment type="function">
    <text evidence="1">Catalyzes the formation of 5-methyl-uridine at position 1939 (m5U1939) in 23S rRNA.</text>
</comment>
<comment type="catalytic activity">
    <reaction evidence="1">
        <text>uridine(1939) in 23S rRNA + S-adenosyl-L-methionine = 5-methyluridine(1939) in 23S rRNA + S-adenosyl-L-homocysteine + H(+)</text>
        <dbReference type="Rhea" id="RHEA:42908"/>
        <dbReference type="Rhea" id="RHEA-COMP:10278"/>
        <dbReference type="Rhea" id="RHEA-COMP:10279"/>
        <dbReference type="ChEBI" id="CHEBI:15378"/>
        <dbReference type="ChEBI" id="CHEBI:57856"/>
        <dbReference type="ChEBI" id="CHEBI:59789"/>
        <dbReference type="ChEBI" id="CHEBI:65315"/>
        <dbReference type="ChEBI" id="CHEBI:74447"/>
        <dbReference type="EC" id="2.1.1.190"/>
    </reaction>
</comment>
<comment type="similarity">
    <text evidence="1">Belongs to the class I-like SAM-binding methyltransferase superfamily. RNA M5U methyltransferase family. RlmD subfamily.</text>
</comment>
<protein>
    <recommendedName>
        <fullName evidence="1">23S rRNA (uracil(1939)-C(5))-methyltransferase RlmD</fullName>
        <ecNumber evidence="1">2.1.1.190</ecNumber>
    </recommendedName>
    <alternativeName>
        <fullName evidence="1">23S rRNA(m5U1939)-methyltransferase</fullName>
    </alternativeName>
</protein>
<feature type="chain" id="PRO_0000161903" description="23S rRNA (uracil(1939)-C(5))-methyltransferase RlmD">
    <location>
        <begin position="1"/>
        <end position="443"/>
    </location>
</feature>
<feature type="domain" description="TRAM" evidence="1">
    <location>
        <begin position="8"/>
        <end position="66"/>
    </location>
</feature>
<feature type="active site" description="Nucleophile" evidence="1">
    <location>
        <position position="400"/>
    </location>
</feature>
<feature type="binding site" evidence="1">
    <location>
        <position position="79"/>
    </location>
    <ligand>
        <name>[4Fe-4S] cluster</name>
        <dbReference type="ChEBI" id="CHEBI:49883"/>
    </ligand>
</feature>
<feature type="binding site" evidence="1">
    <location>
        <position position="85"/>
    </location>
    <ligand>
        <name>[4Fe-4S] cluster</name>
        <dbReference type="ChEBI" id="CHEBI:49883"/>
    </ligand>
</feature>
<feature type="binding site" evidence="1">
    <location>
        <position position="88"/>
    </location>
    <ligand>
        <name>[4Fe-4S] cluster</name>
        <dbReference type="ChEBI" id="CHEBI:49883"/>
    </ligand>
</feature>
<feature type="binding site" evidence="1">
    <location>
        <position position="167"/>
    </location>
    <ligand>
        <name>[4Fe-4S] cluster</name>
        <dbReference type="ChEBI" id="CHEBI:49883"/>
    </ligand>
</feature>
<feature type="binding site" evidence="1">
    <location>
        <position position="276"/>
    </location>
    <ligand>
        <name>S-adenosyl-L-methionine</name>
        <dbReference type="ChEBI" id="CHEBI:59789"/>
    </ligand>
</feature>
<feature type="binding site" evidence="1">
    <location>
        <position position="305"/>
    </location>
    <ligand>
        <name>S-adenosyl-L-methionine</name>
        <dbReference type="ChEBI" id="CHEBI:59789"/>
    </ligand>
</feature>
<feature type="binding site" evidence="1">
    <location>
        <position position="310"/>
    </location>
    <ligand>
        <name>S-adenosyl-L-methionine</name>
        <dbReference type="ChEBI" id="CHEBI:59789"/>
    </ligand>
</feature>
<feature type="binding site" evidence="1">
    <location>
        <position position="326"/>
    </location>
    <ligand>
        <name>S-adenosyl-L-methionine</name>
        <dbReference type="ChEBI" id="CHEBI:59789"/>
    </ligand>
</feature>
<feature type="binding site" evidence="1">
    <location>
        <position position="353"/>
    </location>
    <ligand>
        <name>S-adenosyl-L-methionine</name>
        <dbReference type="ChEBI" id="CHEBI:59789"/>
    </ligand>
</feature>
<feature type="binding site" evidence="1">
    <location>
        <position position="374"/>
    </location>
    <ligand>
        <name>S-adenosyl-L-methionine</name>
        <dbReference type="ChEBI" id="CHEBI:59789"/>
    </ligand>
</feature>
<evidence type="ECO:0000255" key="1">
    <source>
        <dbReference type="HAMAP-Rule" id="MF_01010"/>
    </source>
</evidence>
<gene>
    <name evidence="1" type="primary">rlmD</name>
    <name type="synonym">rumA</name>
    <name type="ordered locus">MCA1898</name>
</gene>
<organism>
    <name type="scientific">Methylococcus capsulatus (strain ATCC 33009 / NCIMB 11132 / Bath)</name>
    <dbReference type="NCBI Taxonomy" id="243233"/>
    <lineage>
        <taxon>Bacteria</taxon>
        <taxon>Pseudomonadati</taxon>
        <taxon>Pseudomonadota</taxon>
        <taxon>Gammaproteobacteria</taxon>
        <taxon>Methylococcales</taxon>
        <taxon>Methylococcaceae</taxon>
        <taxon>Methylococcus</taxon>
    </lineage>
</organism>